<feature type="chain" id="PRO_0000312786" description="Putative nucleotidyltransferase MAB21L1">
    <location>
        <begin position="1"/>
        <end position="359"/>
    </location>
</feature>
<feature type="binding site" evidence="2">
    <location>
        <begin position="23"/>
        <end position="24"/>
    </location>
    <ligand>
        <name>a ribonucleoside 5'-triphosphate</name>
        <dbReference type="ChEBI" id="CHEBI:61557"/>
    </ligand>
</feature>
<feature type="binding site" evidence="2">
    <location>
        <begin position="63"/>
        <end position="66"/>
    </location>
    <ligand>
        <name>a ribonucleoside 5'-triphosphate</name>
        <dbReference type="ChEBI" id="CHEBI:61557"/>
    </ligand>
</feature>
<feature type="binding site" evidence="3">
    <location>
        <position position="73"/>
    </location>
    <ligand>
        <name>Mg(2+)</name>
        <dbReference type="ChEBI" id="CHEBI:18420"/>
        <note>catalytic</note>
    </ligand>
</feature>
<feature type="binding site" evidence="3">
    <location>
        <position position="75"/>
    </location>
    <ligand>
        <name>Mg(2+)</name>
        <dbReference type="ChEBI" id="CHEBI:18420"/>
        <note>catalytic</note>
    </ligand>
</feature>
<feature type="binding site" evidence="2">
    <location>
        <position position="248"/>
    </location>
    <ligand>
        <name>a ribonucleoside 5'-triphosphate</name>
        <dbReference type="ChEBI" id="CHEBI:61557"/>
    </ligand>
</feature>
<feature type="binding site" evidence="2">
    <location>
        <begin position="252"/>
        <end position="255"/>
    </location>
    <ligand>
        <name>a ribonucleoside 5'-triphosphate</name>
        <dbReference type="ChEBI" id="CHEBI:61557"/>
    </ligand>
</feature>
<comment type="function">
    <text evidence="1 2">Putative nucleotidyltransferase required for several aspects of embryonic development including normal development of the eye (By similarity). It is unclear whether it displays nucleotidyltransferase activity in vivo. Binds single-stranded RNA (ssRNA) (By similarity).</text>
</comment>
<comment type="subunit">
    <text evidence="2">Monomer. Homodecamer; composed of 2 back to back homopentamers. The protein may exist as monomer in solution and oiligomerizes upon ligand binding.</text>
</comment>
<comment type="subcellular location">
    <subcellularLocation>
        <location evidence="1">Nucleus</location>
    </subcellularLocation>
</comment>
<comment type="similarity">
    <text evidence="4">Belongs to the mab-21 family.</text>
</comment>
<accession>Q0V9X7</accession>
<keyword id="KW-0217">Developmental protein</keyword>
<keyword id="KW-0460">Magnesium</keyword>
<keyword id="KW-0479">Metal-binding</keyword>
<keyword id="KW-0547">Nucleotide-binding</keyword>
<keyword id="KW-0548">Nucleotidyltransferase</keyword>
<keyword id="KW-0539">Nucleus</keyword>
<keyword id="KW-1185">Reference proteome</keyword>
<keyword id="KW-0808">Transferase</keyword>
<protein>
    <recommendedName>
        <fullName>Putative nucleotidyltransferase MAB21L1</fullName>
        <ecNumber evidence="4">2.7.7.-</ecNumber>
    </recommendedName>
    <alternativeName>
        <fullName>Protein mab-21-like 1</fullName>
    </alternativeName>
</protein>
<sequence>MVAAQAKLVYHLNKYYNEKCQARKAAIAKTIREVCKVVSDVLKEVEVQEPRFISSLNEMDNRYEGLEVISPTEFEVVLYLNQMGVFNFVDDGSLPGCAVLKLSDGRKRSMSLWVEFITASGYLSARKIRSRFQTLVAQAVDKCSYRDVVKMVADTSEVKLRIRDRYVVQITPAFKCTGIWPRSAAHWPLPHIPWPGPNRVAEVKAEGFNLLSKECHTLAGKQSSAESDAWVLQFAEAENRLQLGGCRKKCLSLLKTLRDRHLELPGQPLNNYHMKTLVSYECEKHPRESDWDESCLGDRLNGILLQLISCLQCRRCPHYFLPNLDLFQGKPHSALENAAKQTWRLAREILTNPKSLEKL</sequence>
<name>MB211_XENTR</name>
<reference key="1">
    <citation type="submission" date="2006-08" db="EMBL/GenBank/DDBJ databases">
        <authorList>
            <consortium name="NIH - Xenopus Gene Collection (XGC) project"/>
        </authorList>
    </citation>
    <scope>NUCLEOTIDE SEQUENCE [LARGE SCALE MRNA]</scope>
    <source>
        <tissue>Brain</tissue>
    </source>
</reference>
<organism>
    <name type="scientific">Xenopus tropicalis</name>
    <name type="common">Western clawed frog</name>
    <name type="synonym">Silurana tropicalis</name>
    <dbReference type="NCBI Taxonomy" id="8364"/>
    <lineage>
        <taxon>Eukaryota</taxon>
        <taxon>Metazoa</taxon>
        <taxon>Chordata</taxon>
        <taxon>Craniata</taxon>
        <taxon>Vertebrata</taxon>
        <taxon>Euteleostomi</taxon>
        <taxon>Amphibia</taxon>
        <taxon>Batrachia</taxon>
        <taxon>Anura</taxon>
        <taxon>Pipoidea</taxon>
        <taxon>Pipidae</taxon>
        <taxon>Xenopodinae</taxon>
        <taxon>Xenopus</taxon>
        <taxon>Silurana</taxon>
    </lineage>
</organism>
<dbReference type="EC" id="2.7.7.-" evidence="4"/>
<dbReference type="EMBL" id="BC121357">
    <property type="protein sequence ID" value="AAI21358.1"/>
    <property type="molecule type" value="mRNA"/>
</dbReference>
<dbReference type="RefSeq" id="NP_001072797.1">
    <property type="nucleotide sequence ID" value="NM_001079329.1"/>
</dbReference>
<dbReference type="SMR" id="Q0V9X7"/>
<dbReference type="FunCoup" id="Q0V9X7">
    <property type="interactions" value="54"/>
</dbReference>
<dbReference type="STRING" id="8364.ENSXETP00000019455"/>
<dbReference type="PaxDb" id="8364-ENSXETP00000037322"/>
<dbReference type="DNASU" id="780258"/>
<dbReference type="GeneID" id="780258"/>
<dbReference type="KEGG" id="xtr:780258"/>
<dbReference type="AGR" id="Xenbase:XB-GENE-1001177"/>
<dbReference type="CTD" id="4081"/>
<dbReference type="Xenbase" id="XB-GENE-1001177">
    <property type="gene designation" value="mab21l1"/>
</dbReference>
<dbReference type="eggNOG" id="KOG3963">
    <property type="taxonomic scope" value="Eukaryota"/>
</dbReference>
<dbReference type="HOGENOM" id="CLU_045315_0_0_1"/>
<dbReference type="InParanoid" id="Q0V9X7"/>
<dbReference type="OMA" id="RESIYMK"/>
<dbReference type="OrthoDB" id="5961151at2759"/>
<dbReference type="PhylomeDB" id="Q0V9X7"/>
<dbReference type="TreeFam" id="TF315012"/>
<dbReference type="Proteomes" id="UP000008143">
    <property type="component" value="Chromosome 2"/>
</dbReference>
<dbReference type="Bgee" id="ENSXETG00000017124">
    <property type="expression patterns" value="Expressed in brain and 10 other cell types or tissues"/>
</dbReference>
<dbReference type="ExpressionAtlas" id="Q0V9X7">
    <property type="expression patterns" value="baseline"/>
</dbReference>
<dbReference type="GO" id="GO:0005634">
    <property type="term" value="C:nucleus"/>
    <property type="evidence" value="ECO:0007669"/>
    <property type="project" value="UniProtKB-SubCell"/>
</dbReference>
<dbReference type="GO" id="GO:0046872">
    <property type="term" value="F:metal ion binding"/>
    <property type="evidence" value="ECO:0007669"/>
    <property type="project" value="UniProtKB-KW"/>
</dbReference>
<dbReference type="GO" id="GO:0000166">
    <property type="term" value="F:nucleotide binding"/>
    <property type="evidence" value="ECO:0007669"/>
    <property type="project" value="UniProtKB-KW"/>
</dbReference>
<dbReference type="GO" id="GO:0016779">
    <property type="term" value="F:nucleotidyltransferase activity"/>
    <property type="evidence" value="ECO:0007669"/>
    <property type="project" value="UniProtKB-KW"/>
</dbReference>
<dbReference type="GO" id="GO:0061303">
    <property type="term" value="P:cornea development in camera-type eye"/>
    <property type="evidence" value="ECO:0007669"/>
    <property type="project" value="Ensembl"/>
</dbReference>
<dbReference type="FunFam" id="1.10.1410.40:FF:000002">
    <property type="entry name" value="protein mab-21-like 1"/>
    <property type="match status" value="1"/>
</dbReference>
<dbReference type="FunFam" id="3.30.460.90:FF:000001">
    <property type="entry name" value="protein mab-21-like 2"/>
    <property type="match status" value="1"/>
</dbReference>
<dbReference type="Gene3D" id="1.10.1410.40">
    <property type="match status" value="1"/>
</dbReference>
<dbReference type="Gene3D" id="3.30.460.90">
    <property type="match status" value="1"/>
</dbReference>
<dbReference type="InterPro" id="IPR046903">
    <property type="entry name" value="Mab-21-like_nuc_Trfase"/>
</dbReference>
<dbReference type="InterPro" id="IPR046906">
    <property type="entry name" value="Mab-21_HhH/H2TH-like"/>
</dbReference>
<dbReference type="InterPro" id="IPR024810">
    <property type="entry name" value="MAB21L/cGLR"/>
</dbReference>
<dbReference type="PANTHER" id="PTHR10656">
    <property type="entry name" value="CELL FATE DETERMINING PROTEIN MAB21-RELATED"/>
    <property type="match status" value="1"/>
</dbReference>
<dbReference type="PANTHER" id="PTHR10656:SF38">
    <property type="entry name" value="NUCLEOTIDYLTRANSFERASE MAB21L1-RELATED"/>
    <property type="match status" value="1"/>
</dbReference>
<dbReference type="Pfam" id="PF03281">
    <property type="entry name" value="Mab-21"/>
    <property type="match status" value="1"/>
</dbReference>
<dbReference type="Pfam" id="PF20266">
    <property type="entry name" value="Mab-21_C"/>
    <property type="match status" value="1"/>
</dbReference>
<dbReference type="SMART" id="SM01265">
    <property type="entry name" value="Mab-21"/>
    <property type="match status" value="1"/>
</dbReference>
<evidence type="ECO:0000250" key="1">
    <source>
        <dbReference type="UniProtKB" id="O70299"/>
    </source>
</evidence>
<evidence type="ECO:0000250" key="2">
    <source>
        <dbReference type="UniProtKB" id="Q13394"/>
    </source>
</evidence>
<evidence type="ECO:0000250" key="3">
    <source>
        <dbReference type="UniProtKB" id="Q8N884"/>
    </source>
</evidence>
<evidence type="ECO:0000305" key="4"/>
<gene>
    <name type="primary">mab21l1</name>
</gene>
<proteinExistence type="evidence at transcript level"/>